<accession>Q7NI67</accession>
<evidence type="ECO:0000255" key="1">
    <source>
        <dbReference type="HAMAP-Rule" id="MF_00046"/>
    </source>
</evidence>
<name>MURC_GLOVI</name>
<proteinExistence type="inferred from homology"/>
<gene>
    <name evidence="1" type="primary">murC</name>
    <name type="ordered locus">glr2316</name>
</gene>
<keyword id="KW-0067">ATP-binding</keyword>
<keyword id="KW-0131">Cell cycle</keyword>
<keyword id="KW-0132">Cell division</keyword>
<keyword id="KW-0133">Cell shape</keyword>
<keyword id="KW-0961">Cell wall biogenesis/degradation</keyword>
<keyword id="KW-0963">Cytoplasm</keyword>
<keyword id="KW-0436">Ligase</keyword>
<keyword id="KW-0547">Nucleotide-binding</keyword>
<keyword id="KW-0573">Peptidoglycan synthesis</keyword>
<keyword id="KW-1185">Reference proteome</keyword>
<protein>
    <recommendedName>
        <fullName evidence="1">UDP-N-acetylmuramate--L-alanine ligase</fullName>
        <ecNumber evidence="1">6.3.2.8</ecNumber>
    </recommendedName>
    <alternativeName>
        <fullName evidence="1">UDP-N-acetylmuramoyl-L-alanine synthetase</fullName>
    </alternativeName>
</protein>
<reference key="1">
    <citation type="journal article" date="2003" name="DNA Res.">
        <title>Complete genome structure of Gloeobacter violaceus PCC 7421, a cyanobacterium that lacks thylakoids.</title>
        <authorList>
            <person name="Nakamura Y."/>
            <person name="Kaneko T."/>
            <person name="Sato S."/>
            <person name="Mimuro M."/>
            <person name="Miyashita H."/>
            <person name="Tsuchiya T."/>
            <person name="Sasamoto S."/>
            <person name="Watanabe A."/>
            <person name="Kawashima K."/>
            <person name="Kishida Y."/>
            <person name="Kiyokawa C."/>
            <person name="Kohara M."/>
            <person name="Matsumoto M."/>
            <person name="Matsuno A."/>
            <person name="Nakazaki N."/>
            <person name="Shimpo S."/>
            <person name="Takeuchi C."/>
            <person name="Yamada M."/>
            <person name="Tabata S."/>
        </authorList>
    </citation>
    <scope>NUCLEOTIDE SEQUENCE [LARGE SCALE GENOMIC DNA]</scope>
    <source>
        <strain>ATCC 29082 / PCC 7421</strain>
    </source>
</reference>
<feature type="chain" id="PRO_0000182098" description="UDP-N-acetylmuramate--L-alanine ligase">
    <location>
        <begin position="1"/>
        <end position="460"/>
    </location>
</feature>
<feature type="binding site" evidence="1">
    <location>
        <begin position="118"/>
        <end position="124"/>
    </location>
    <ligand>
        <name>ATP</name>
        <dbReference type="ChEBI" id="CHEBI:30616"/>
    </ligand>
</feature>
<organism>
    <name type="scientific">Gloeobacter violaceus (strain ATCC 29082 / PCC 7421)</name>
    <dbReference type="NCBI Taxonomy" id="251221"/>
    <lineage>
        <taxon>Bacteria</taxon>
        <taxon>Bacillati</taxon>
        <taxon>Cyanobacteriota</taxon>
        <taxon>Cyanophyceae</taxon>
        <taxon>Gloeobacterales</taxon>
        <taxon>Gloeobacteraceae</taxon>
        <taxon>Gloeobacter</taxon>
    </lineage>
</organism>
<comment type="function">
    <text evidence="1">Cell wall formation.</text>
</comment>
<comment type="catalytic activity">
    <reaction evidence="1">
        <text>UDP-N-acetyl-alpha-D-muramate + L-alanine + ATP = UDP-N-acetyl-alpha-D-muramoyl-L-alanine + ADP + phosphate + H(+)</text>
        <dbReference type="Rhea" id="RHEA:23372"/>
        <dbReference type="ChEBI" id="CHEBI:15378"/>
        <dbReference type="ChEBI" id="CHEBI:30616"/>
        <dbReference type="ChEBI" id="CHEBI:43474"/>
        <dbReference type="ChEBI" id="CHEBI:57972"/>
        <dbReference type="ChEBI" id="CHEBI:70757"/>
        <dbReference type="ChEBI" id="CHEBI:83898"/>
        <dbReference type="ChEBI" id="CHEBI:456216"/>
        <dbReference type="EC" id="6.3.2.8"/>
    </reaction>
</comment>
<comment type="pathway">
    <text evidence="1">Cell wall biogenesis; peptidoglycan biosynthesis.</text>
</comment>
<comment type="subcellular location">
    <subcellularLocation>
        <location evidence="1">Cytoplasm</location>
    </subcellularLocation>
</comment>
<comment type="similarity">
    <text evidence="1">Belongs to the MurCDEF family.</text>
</comment>
<dbReference type="EC" id="6.3.2.8" evidence="1"/>
<dbReference type="EMBL" id="BA000045">
    <property type="protein sequence ID" value="BAC90257.1"/>
    <property type="molecule type" value="Genomic_DNA"/>
</dbReference>
<dbReference type="RefSeq" id="NP_925262.1">
    <property type="nucleotide sequence ID" value="NC_005125.1"/>
</dbReference>
<dbReference type="RefSeq" id="WP_011142313.1">
    <property type="nucleotide sequence ID" value="NC_005125.1"/>
</dbReference>
<dbReference type="SMR" id="Q7NI67"/>
<dbReference type="FunCoup" id="Q7NI67">
    <property type="interactions" value="50"/>
</dbReference>
<dbReference type="STRING" id="251221.gene:10759811"/>
<dbReference type="EnsemblBacteria" id="BAC90257">
    <property type="protein sequence ID" value="BAC90257"/>
    <property type="gene ID" value="BAC90257"/>
</dbReference>
<dbReference type="KEGG" id="gvi:glr2316"/>
<dbReference type="PATRIC" id="fig|251221.4.peg.2353"/>
<dbReference type="eggNOG" id="COG0773">
    <property type="taxonomic scope" value="Bacteria"/>
</dbReference>
<dbReference type="HOGENOM" id="CLU_028104_2_2_3"/>
<dbReference type="InParanoid" id="Q7NI67"/>
<dbReference type="OrthoDB" id="9804126at2"/>
<dbReference type="PhylomeDB" id="Q7NI67"/>
<dbReference type="UniPathway" id="UPA00219"/>
<dbReference type="Proteomes" id="UP000000557">
    <property type="component" value="Chromosome"/>
</dbReference>
<dbReference type="GO" id="GO:0005737">
    <property type="term" value="C:cytoplasm"/>
    <property type="evidence" value="ECO:0007669"/>
    <property type="project" value="UniProtKB-SubCell"/>
</dbReference>
<dbReference type="GO" id="GO:0005524">
    <property type="term" value="F:ATP binding"/>
    <property type="evidence" value="ECO:0007669"/>
    <property type="project" value="UniProtKB-UniRule"/>
</dbReference>
<dbReference type="GO" id="GO:0008763">
    <property type="term" value="F:UDP-N-acetylmuramate-L-alanine ligase activity"/>
    <property type="evidence" value="ECO:0007669"/>
    <property type="project" value="UniProtKB-UniRule"/>
</dbReference>
<dbReference type="GO" id="GO:0051301">
    <property type="term" value="P:cell division"/>
    <property type="evidence" value="ECO:0007669"/>
    <property type="project" value="UniProtKB-KW"/>
</dbReference>
<dbReference type="GO" id="GO:0071555">
    <property type="term" value="P:cell wall organization"/>
    <property type="evidence" value="ECO:0007669"/>
    <property type="project" value="UniProtKB-KW"/>
</dbReference>
<dbReference type="GO" id="GO:0009252">
    <property type="term" value="P:peptidoglycan biosynthetic process"/>
    <property type="evidence" value="ECO:0007669"/>
    <property type="project" value="UniProtKB-UniRule"/>
</dbReference>
<dbReference type="GO" id="GO:0008360">
    <property type="term" value="P:regulation of cell shape"/>
    <property type="evidence" value="ECO:0007669"/>
    <property type="project" value="UniProtKB-KW"/>
</dbReference>
<dbReference type="Gene3D" id="3.90.190.20">
    <property type="entry name" value="Mur ligase, C-terminal domain"/>
    <property type="match status" value="1"/>
</dbReference>
<dbReference type="Gene3D" id="3.40.1190.10">
    <property type="entry name" value="Mur-like, catalytic domain"/>
    <property type="match status" value="1"/>
</dbReference>
<dbReference type="Gene3D" id="3.40.50.720">
    <property type="entry name" value="NAD(P)-binding Rossmann-like Domain"/>
    <property type="match status" value="1"/>
</dbReference>
<dbReference type="HAMAP" id="MF_00046">
    <property type="entry name" value="MurC"/>
    <property type="match status" value="1"/>
</dbReference>
<dbReference type="InterPro" id="IPR036565">
    <property type="entry name" value="Mur-like_cat_sf"/>
</dbReference>
<dbReference type="InterPro" id="IPR004101">
    <property type="entry name" value="Mur_ligase_C"/>
</dbReference>
<dbReference type="InterPro" id="IPR036615">
    <property type="entry name" value="Mur_ligase_C_dom_sf"/>
</dbReference>
<dbReference type="InterPro" id="IPR013221">
    <property type="entry name" value="Mur_ligase_cen"/>
</dbReference>
<dbReference type="InterPro" id="IPR000713">
    <property type="entry name" value="Mur_ligase_N"/>
</dbReference>
<dbReference type="InterPro" id="IPR050061">
    <property type="entry name" value="MurCDEF_pg_biosynth"/>
</dbReference>
<dbReference type="InterPro" id="IPR005758">
    <property type="entry name" value="UDP-N-AcMur_Ala_ligase_MurC"/>
</dbReference>
<dbReference type="NCBIfam" id="TIGR01082">
    <property type="entry name" value="murC"/>
    <property type="match status" value="1"/>
</dbReference>
<dbReference type="PANTHER" id="PTHR43445:SF3">
    <property type="entry name" value="UDP-N-ACETYLMURAMATE--L-ALANINE LIGASE"/>
    <property type="match status" value="1"/>
</dbReference>
<dbReference type="PANTHER" id="PTHR43445">
    <property type="entry name" value="UDP-N-ACETYLMURAMATE--L-ALANINE LIGASE-RELATED"/>
    <property type="match status" value="1"/>
</dbReference>
<dbReference type="Pfam" id="PF01225">
    <property type="entry name" value="Mur_ligase"/>
    <property type="match status" value="1"/>
</dbReference>
<dbReference type="Pfam" id="PF02875">
    <property type="entry name" value="Mur_ligase_C"/>
    <property type="match status" value="1"/>
</dbReference>
<dbReference type="Pfam" id="PF08245">
    <property type="entry name" value="Mur_ligase_M"/>
    <property type="match status" value="1"/>
</dbReference>
<dbReference type="SUPFAM" id="SSF51984">
    <property type="entry name" value="MurCD N-terminal domain"/>
    <property type="match status" value="1"/>
</dbReference>
<dbReference type="SUPFAM" id="SSF53623">
    <property type="entry name" value="MurD-like peptide ligases, catalytic domain"/>
    <property type="match status" value="1"/>
</dbReference>
<dbReference type="SUPFAM" id="SSF53244">
    <property type="entry name" value="MurD-like peptide ligases, peptide-binding domain"/>
    <property type="match status" value="1"/>
</dbReference>
<sequence length="460" mass="49482">MNMSLDPLVTGEVSHFVGIGGIGMSGLALVLRSQGKRVSGSDLKPNLQTQRLEASGISVFYGHRAENLQGVTRLVYSSAIQPDNPELLAARRGGVAVRHRAQVLAQLAEGYRMIGVSGTHGKTTTSSLIAVMLYHCGLDPTVVVGGEVDELGGNARLGSGPHLVAEVDESDGSLVLFSPEVAVVTNIEGDHLDHYANLEQIVEAFQQYANQARVVVGCLDCQAVRDRMPLTVSYSLDGHPQADYTADRVSFTAQGTTARVLERGEVLGELSLKLLGRHNLANALAAVAVGRYLGLSFEQIAAGLREFRGAHRRFERIGERDDIVFVDDYAHHPSEVRATLAAARLQGRRVVAVFQPHRYSRSQLLLDEFGTAFGDADAVVVTEIYAAGEANTLGVSGELVARRIAAHHPDVHFEATSDSLKRHLEAHLRPGDLALFLGAGNLNRIIPELLQRAEPPALAL</sequence>